<proteinExistence type="inferred from homology"/>
<comment type="function">
    <text evidence="1">Involved in protein export. Acts as a chaperone by maintaining the newly synthesized protein in an open conformation. Functions as a peptidyl-prolyl cis-trans isomerase.</text>
</comment>
<comment type="catalytic activity">
    <reaction evidence="1">
        <text>[protein]-peptidylproline (omega=180) = [protein]-peptidylproline (omega=0)</text>
        <dbReference type="Rhea" id="RHEA:16237"/>
        <dbReference type="Rhea" id="RHEA-COMP:10747"/>
        <dbReference type="Rhea" id="RHEA-COMP:10748"/>
        <dbReference type="ChEBI" id="CHEBI:83833"/>
        <dbReference type="ChEBI" id="CHEBI:83834"/>
        <dbReference type="EC" id="5.2.1.8"/>
    </reaction>
</comment>
<comment type="subcellular location">
    <subcellularLocation>
        <location>Cytoplasm</location>
    </subcellularLocation>
    <text evidence="1">About half TF is bound to the ribosome near the polypeptide exit tunnel while the other half is free in the cytoplasm.</text>
</comment>
<comment type="domain">
    <text evidence="1">Consists of 3 domains; the N-terminus binds the ribosome, the middle domain has PPIase activity, while the C-terminus has intrinsic chaperone activity on its own.</text>
</comment>
<comment type="similarity">
    <text evidence="1">Belongs to the FKBP-type PPIase family. Tig subfamily.</text>
</comment>
<sequence>MEFNANRVDEANAVITATLTKDSIENNLEKVAKQAAKTMNVQGFRKGKVPVAVVKQRYADKLREDAEADGIRKILADGLKLLDIKNSDLIGEPSVTKFDKKDNGDIEVELSVACKPNIDLGDYKSLVPAVKAIEIDIKKIDDRLTEIAQSSAPLEKIARKRAVKDGDFAVIDFEGFVDGVAFDGGKAEKYPLQIGSGSFIPGFEEQVIGMKYEEQKDITVKFPESYQAKDLAGKEAVFKVTLHEIQERAKPELNDEFAQKMLPGQKDVTIDTLRDRVKEQMLAEDKAKYYRDELKPVFLETLVEKINFALPTSVIEQEINYALNNKIRTMTEEEINELKENANKVEDIRNELKEDAVNSVKATFIIDALAKAENVQVSDQEVTQVLYFEAMQMGQNPQDVIKQYQQAGYLPAIKMSMIEEKVISKLLDEKLGK</sequence>
<keyword id="KW-0131">Cell cycle</keyword>
<keyword id="KW-0132">Cell division</keyword>
<keyword id="KW-0143">Chaperone</keyword>
<keyword id="KW-0963">Cytoplasm</keyword>
<keyword id="KW-0413">Isomerase</keyword>
<keyword id="KW-1185">Reference proteome</keyword>
<keyword id="KW-0697">Rotamase</keyword>
<accession>A8EVH6</accession>
<feature type="chain" id="PRO_1000059323" description="Trigger factor">
    <location>
        <begin position="1"/>
        <end position="433"/>
    </location>
</feature>
<feature type="domain" description="PPIase FKBP-type" evidence="1">
    <location>
        <begin position="166"/>
        <end position="251"/>
    </location>
</feature>
<reference key="1">
    <citation type="journal article" date="2007" name="PLoS ONE">
        <title>The complete genome sequence and analysis of the Epsilonproteobacterium Arcobacter butzleri.</title>
        <authorList>
            <person name="Miller W.G."/>
            <person name="Parker C.T."/>
            <person name="Rubenfield M."/>
            <person name="Mendz G.L."/>
            <person name="Woesten M.M.S.M."/>
            <person name="Ussery D.W."/>
            <person name="Stolz J.F."/>
            <person name="Binnewies T.T."/>
            <person name="Hallin P.F."/>
            <person name="Wang G."/>
            <person name="Malek J.A."/>
            <person name="Rogosin A."/>
            <person name="Stanker L.H."/>
            <person name="Mandrell R.E."/>
        </authorList>
    </citation>
    <scope>NUCLEOTIDE SEQUENCE [LARGE SCALE GENOMIC DNA]</scope>
    <source>
        <strain>RM4018</strain>
    </source>
</reference>
<gene>
    <name evidence="1" type="primary">tig</name>
    <name type="ordered locus">Abu_1702</name>
</gene>
<evidence type="ECO:0000255" key="1">
    <source>
        <dbReference type="HAMAP-Rule" id="MF_00303"/>
    </source>
</evidence>
<protein>
    <recommendedName>
        <fullName evidence="1">Trigger factor</fullName>
        <shortName evidence="1">TF</shortName>
        <ecNumber evidence="1">5.2.1.8</ecNumber>
    </recommendedName>
    <alternativeName>
        <fullName evidence="1">PPIase</fullName>
    </alternativeName>
</protein>
<dbReference type="EC" id="5.2.1.8" evidence="1"/>
<dbReference type="EMBL" id="CP000361">
    <property type="protein sequence ID" value="ABV67949.1"/>
    <property type="molecule type" value="Genomic_DNA"/>
</dbReference>
<dbReference type="RefSeq" id="WP_004509889.1">
    <property type="nucleotide sequence ID" value="NC_009850.1"/>
</dbReference>
<dbReference type="SMR" id="A8EVH6"/>
<dbReference type="STRING" id="367737.Abu_1702"/>
<dbReference type="GeneID" id="24305092"/>
<dbReference type="KEGG" id="abu:Abu_1702"/>
<dbReference type="eggNOG" id="COG0544">
    <property type="taxonomic scope" value="Bacteria"/>
</dbReference>
<dbReference type="HOGENOM" id="CLU_033058_2_2_7"/>
<dbReference type="Proteomes" id="UP000001136">
    <property type="component" value="Chromosome"/>
</dbReference>
<dbReference type="GO" id="GO:0005737">
    <property type="term" value="C:cytoplasm"/>
    <property type="evidence" value="ECO:0007669"/>
    <property type="project" value="UniProtKB-SubCell"/>
</dbReference>
<dbReference type="GO" id="GO:0003755">
    <property type="term" value="F:peptidyl-prolyl cis-trans isomerase activity"/>
    <property type="evidence" value="ECO:0007669"/>
    <property type="project" value="UniProtKB-UniRule"/>
</dbReference>
<dbReference type="GO" id="GO:0044183">
    <property type="term" value="F:protein folding chaperone"/>
    <property type="evidence" value="ECO:0007669"/>
    <property type="project" value="TreeGrafter"/>
</dbReference>
<dbReference type="GO" id="GO:0043022">
    <property type="term" value="F:ribosome binding"/>
    <property type="evidence" value="ECO:0007669"/>
    <property type="project" value="TreeGrafter"/>
</dbReference>
<dbReference type="GO" id="GO:0051083">
    <property type="term" value="P:'de novo' cotranslational protein folding"/>
    <property type="evidence" value="ECO:0007669"/>
    <property type="project" value="TreeGrafter"/>
</dbReference>
<dbReference type="GO" id="GO:0051301">
    <property type="term" value="P:cell division"/>
    <property type="evidence" value="ECO:0007669"/>
    <property type="project" value="UniProtKB-KW"/>
</dbReference>
<dbReference type="GO" id="GO:0061077">
    <property type="term" value="P:chaperone-mediated protein folding"/>
    <property type="evidence" value="ECO:0007669"/>
    <property type="project" value="TreeGrafter"/>
</dbReference>
<dbReference type="GO" id="GO:0015031">
    <property type="term" value="P:protein transport"/>
    <property type="evidence" value="ECO:0007669"/>
    <property type="project" value="UniProtKB-UniRule"/>
</dbReference>
<dbReference type="GO" id="GO:0043335">
    <property type="term" value="P:protein unfolding"/>
    <property type="evidence" value="ECO:0007669"/>
    <property type="project" value="TreeGrafter"/>
</dbReference>
<dbReference type="FunFam" id="3.10.50.40:FF:000001">
    <property type="entry name" value="Trigger factor"/>
    <property type="match status" value="1"/>
</dbReference>
<dbReference type="Gene3D" id="3.10.50.40">
    <property type="match status" value="1"/>
</dbReference>
<dbReference type="Gene3D" id="3.30.70.1050">
    <property type="entry name" value="Trigger factor ribosome-binding domain"/>
    <property type="match status" value="1"/>
</dbReference>
<dbReference type="Gene3D" id="1.10.3120.10">
    <property type="entry name" value="Trigger factor, C-terminal domain"/>
    <property type="match status" value="1"/>
</dbReference>
<dbReference type="HAMAP" id="MF_00303">
    <property type="entry name" value="Trigger_factor_Tig"/>
    <property type="match status" value="1"/>
</dbReference>
<dbReference type="InterPro" id="IPR046357">
    <property type="entry name" value="PPIase_dom_sf"/>
</dbReference>
<dbReference type="InterPro" id="IPR001179">
    <property type="entry name" value="PPIase_FKBP_dom"/>
</dbReference>
<dbReference type="InterPro" id="IPR005215">
    <property type="entry name" value="Trig_fac"/>
</dbReference>
<dbReference type="InterPro" id="IPR008880">
    <property type="entry name" value="Trigger_fac_C"/>
</dbReference>
<dbReference type="InterPro" id="IPR037041">
    <property type="entry name" value="Trigger_fac_C_sf"/>
</dbReference>
<dbReference type="InterPro" id="IPR008881">
    <property type="entry name" value="Trigger_fac_ribosome-bd_bac"/>
</dbReference>
<dbReference type="InterPro" id="IPR036611">
    <property type="entry name" value="Trigger_fac_ribosome-bd_sf"/>
</dbReference>
<dbReference type="InterPro" id="IPR027304">
    <property type="entry name" value="Trigger_fact/SurA_dom_sf"/>
</dbReference>
<dbReference type="NCBIfam" id="TIGR00115">
    <property type="entry name" value="tig"/>
    <property type="match status" value="1"/>
</dbReference>
<dbReference type="PANTHER" id="PTHR30560">
    <property type="entry name" value="TRIGGER FACTOR CHAPERONE AND PEPTIDYL-PROLYL CIS/TRANS ISOMERASE"/>
    <property type="match status" value="1"/>
</dbReference>
<dbReference type="PANTHER" id="PTHR30560:SF3">
    <property type="entry name" value="TRIGGER FACTOR-LIKE PROTEIN TIG, CHLOROPLASTIC"/>
    <property type="match status" value="1"/>
</dbReference>
<dbReference type="Pfam" id="PF00254">
    <property type="entry name" value="FKBP_C"/>
    <property type="match status" value="1"/>
</dbReference>
<dbReference type="Pfam" id="PF05698">
    <property type="entry name" value="Trigger_C"/>
    <property type="match status" value="1"/>
</dbReference>
<dbReference type="Pfam" id="PF05697">
    <property type="entry name" value="Trigger_N"/>
    <property type="match status" value="1"/>
</dbReference>
<dbReference type="PIRSF" id="PIRSF003095">
    <property type="entry name" value="Trigger_factor"/>
    <property type="match status" value="1"/>
</dbReference>
<dbReference type="SUPFAM" id="SSF54534">
    <property type="entry name" value="FKBP-like"/>
    <property type="match status" value="1"/>
</dbReference>
<dbReference type="SUPFAM" id="SSF109998">
    <property type="entry name" value="Triger factor/SurA peptide-binding domain-like"/>
    <property type="match status" value="1"/>
</dbReference>
<dbReference type="SUPFAM" id="SSF102735">
    <property type="entry name" value="Trigger factor ribosome-binding domain"/>
    <property type="match status" value="1"/>
</dbReference>
<dbReference type="PROSITE" id="PS50059">
    <property type="entry name" value="FKBP_PPIASE"/>
    <property type="match status" value="1"/>
</dbReference>
<name>TIG_ALIB4</name>
<organism>
    <name type="scientific">Aliarcobacter butzleri (strain RM4018)</name>
    <name type="common">Arcobacter butzleri</name>
    <dbReference type="NCBI Taxonomy" id="367737"/>
    <lineage>
        <taxon>Bacteria</taxon>
        <taxon>Pseudomonadati</taxon>
        <taxon>Campylobacterota</taxon>
        <taxon>Epsilonproteobacteria</taxon>
        <taxon>Campylobacterales</taxon>
        <taxon>Arcobacteraceae</taxon>
        <taxon>Aliarcobacter</taxon>
    </lineage>
</organism>